<proteinExistence type="inferred from homology"/>
<reference key="1">
    <citation type="journal article" date="2005" name="Nucleic Acids Res.">
        <title>Genomic blueprint of Hahella chejuensis, a marine microbe producing an algicidal agent.</title>
        <authorList>
            <person name="Jeong H."/>
            <person name="Yim J.H."/>
            <person name="Lee C."/>
            <person name="Choi S.-H."/>
            <person name="Park Y.K."/>
            <person name="Yoon S.H."/>
            <person name="Hur C.-G."/>
            <person name="Kang H.-Y."/>
            <person name="Kim D."/>
            <person name="Lee H.H."/>
            <person name="Park K.H."/>
            <person name="Park S.-H."/>
            <person name="Park H.-S."/>
            <person name="Lee H.K."/>
            <person name="Oh T.K."/>
            <person name="Kim J.F."/>
        </authorList>
    </citation>
    <scope>NUCLEOTIDE SEQUENCE [LARGE SCALE GENOMIC DNA]</scope>
    <source>
        <strain>KCTC 2396</strain>
    </source>
</reference>
<sequence>MNLLHIKVSPNLFGSASREVSDYLVDRLKVKHPQLNETVLDLSQEPLPHLDGFTIEAFFTEPEQRTEQQKNAVRLSDRMVDMLFASELIVLSSPMWNLGLPSVLKAWFDHITRAGRTFRFTDGGDKIGLVADRKVYVVMASGSAFSNGPYVSHDQFTPYINVAFQYVGIRDLNFIRIDGTHDPLTRDVAVPKAISSVDEMII</sequence>
<accession>Q2SGY7</accession>
<organism>
    <name type="scientific">Hahella chejuensis (strain KCTC 2396)</name>
    <dbReference type="NCBI Taxonomy" id="349521"/>
    <lineage>
        <taxon>Bacteria</taxon>
        <taxon>Pseudomonadati</taxon>
        <taxon>Pseudomonadota</taxon>
        <taxon>Gammaproteobacteria</taxon>
        <taxon>Oceanospirillales</taxon>
        <taxon>Hahellaceae</taxon>
        <taxon>Hahella</taxon>
    </lineage>
</organism>
<keyword id="KW-0285">Flavoprotein</keyword>
<keyword id="KW-0288">FMN</keyword>
<keyword id="KW-0520">NAD</keyword>
<keyword id="KW-0560">Oxidoreductase</keyword>
<keyword id="KW-1185">Reference proteome</keyword>
<comment type="function">
    <text evidence="1">Quinone reductase that provides resistance to thiol-specific stress caused by electrophilic quinones.</text>
</comment>
<comment type="function">
    <text evidence="1">Also exhibits azoreductase activity. Catalyzes the reductive cleavage of the azo bond in aromatic azo compounds to the corresponding amines.</text>
</comment>
<comment type="catalytic activity">
    <reaction evidence="1">
        <text>2 a quinone + NADH + H(+) = 2 a 1,4-benzosemiquinone + NAD(+)</text>
        <dbReference type="Rhea" id="RHEA:65952"/>
        <dbReference type="ChEBI" id="CHEBI:15378"/>
        <dbReference type="ChEBI" id="CHEBI:57540"/>
        <dbReference type="ChEBI" id="CHEBI:57945"/>
        <dbReference type="ChEBI" id="CHEBI:132124"/>
        <dbReference type="ChEBI" id="CHEBI:134225"/>
    </reaction>
</comment>
<comment type="catalytic activity">
    <reaction evidence="1">
        <text>N,N-dimethyl-1,4-phenylenediamine + anthranilate + 2 NAD(+) = 2-(4-dimethylaminophenyl)diazenylbenzoate + 2 NADH + 2 H(+)</text>
        <dbReference type="Rhea" id="RHEA:55872"/>
        <dbReference type="ChEBI" id="CHEBI:15378"/>
        <dbReference type="ChEBI" id="CHEBI:15783"/>
        <dbReference type="ChEBI" id="CHEBI:16567"/>
        <dbReference type="ChEBI" id="CHEBI:57540"/>
        <dbReference type="ChEBI" id="CHEBI:57945"/>
        <dbReference type="ChEBI" id="CHEBI:71579"/>
        <dbReference type="EC" id="1.7.1.17"/>
    </reaction>
</comment>
<comment type="cofactor">
    <cofactor evidence="1">
        <name>FMN</name>
        <dbReference type="ChEBI" id="CHEBI:58210"/>
    </cofactor>
    <text evidence="1">Binds 1 FMN per subunit.</text>
</comment>
<comment type="subunit">
    <text evidence="1">Homodimer.</text>
</comment>
<comment type="similarity">
    <text evidence="1">Belongs to the azoreductase type 1 family.</text>
</comment>
<name>AZOR2_HAHCH</name>
<feature type="chain" id="PRO_0000245922" description="FMN-dependent NADH:quinone oxidoreductase 2">
    <location>
        <begin position="1"/>
        <end position="202"/>
    </location>
</feature>
<feature type="binding site" evidence="1">
    <location>
        <position position="9"/>
    </location>
    <ligand>
        <name>FMN</name>
        <dbReference type="ChEBI" id="CHEBI:58210"/>
    </ligand>
</feature>
<feature type="binding site" evidence="1">
    <location>
        <begin position="15"/>
        <end position="17"/>
    </location>
    <ligand>
        <name>FMN</name>
        <dbReference type="ChEBI" id="CHEBI:58210"/>
    </ligand>
</feature>
<feature type="binding site" evidence="1">
    <location>
        <begin position="95"/>
        <end position="98"/>
    </location>
    <ligand>
        <name>FMN</name>
        <dbReference type="ChEBI" id="CHEBI:58210"/>
    </ligand>
</feature>
<protein>
    <recommendedName>
        <fullName evidence="1">FMN-dependent NADH:quinone oxidoreductase 2</fullName>
        <ecNumber evidence="1">1.6.5.-</ecNumber>
    </recommendedName>
    <alternativeName>
        <fullName evidence="1">Azo-dye reductase 2</fullName>
    </alternativeName>
    <alternativeName>
        <fullName evidence="1">FMN-dependent NADH-azo compound oxidoreductase 2</fullName>
    </alternativeName>
    <alternativeName>
        <fullName evidence="1">FMN-dependent NADH-azoreductase 2</fullName>
        <ecNumber evidence="1">1.7.1.17</ecNumber>
    </alternativeName>
</protein>
<evidence type="ECO:0000255" key="1">
    <source>
        <dbReference type="HAMAP-Rule" id="MF_01216"/>
    </source>
</evidence>
<gene>
    <name evidence="1" type="primary">azoR2</name>
    <name type="ordered locus">HCH_03333</name>
</gene>
<dbReference type="EC" id="1.6.5.-" evidence="1"/>
<dbReference type="EC" id="1.7.1.17" evidence="1"/>
<dbReference type="EMBL" id="CP000155">
    <property type="protein sequence ID" value="ABC30087.1"/>
    <property type="molecule type" value="Genomic_DNA"/>
</dbReference>
<dbReference type="RefSeq" id="WP_011397156.1">
    <property type="nucleotide sequence ID" value="NC_007645.1"/>
</dbReference>
<dbReference type="SMR" id="Q2SGY7"/>
<dbReference type="STRING" id="349521.HCH_03333"/>
<dbReference type="KEGG" id="hch:HCH_03333"/>
<dbReference type="eggNOG" id="COG1182">
    <property type="taxonomic scope" value="Bacteria"/>
</dbReference>
<dbReference type="HOGENOM" id="CLU_088964_0_3_6"/>
<dbReference type="OrthoDB" id="9787136at2"/>
<dbReference type="Proteomes" id="UP000000238">
    <property type="component" value="Chromosome"/>
</dbReference>
<dbReference type="GO" id="GO:0009055">
    <property type="term" value="F:electron transfer activity"/>
    <property type="evidence" value="ECO:0007669"/>
    <property type="project" value="UniProtKB-UniRule"/>
</dbReference>
<dbReference type="GO" id="GO:0010181">
    <property type="term" value="F:FMN binding"/>
    <property type="evidence" value="ECO:0007669"/>
    <property type="project" value="UniProtKB-UniRule"/>
</dbReference>
<dbReference type="GO" id="GO:0016652">
    <property type="term" value="F:oxidoreductase activity, acting on NAD(P)H as acceptor"/>
    <property type="evidence" value="ECO:0007669"/>
    <property type="project" value="UniProtKB-UniRule"/>
</dbReference>
<dbReference type="GO" id="GO:0016655">
    <property type="term" value="F:oxidoreductase activity, acting on NAD(P)H, quinone or similar compound as acceptor"/>
    <property type="evidence" value="ECO:0007669"/>
    <property type="project" value="InterPro"/>
</dbReference>
<dbReference type="Gene3D" id="3.40.50.360">
    <property type="match status" value="1"/>
</dbReference>
<dbReference type="HAMAP" id="MF_01216">
    <property type="entry name" value="Azoreductase_type1"/>
    <property type="match status" value="1"/>
</dbReference>
<dbReference type="InterPro" id="IPR003680">
    <property type="entry name" value="Flavodoxin_fold"/>
</dbReference>
<dbReference type="InterPro" id="IPR029039">
    <property type="entry name" value="Flavoprotein-like_sf"/>
</dbReference>
<dbReference type="InterPro" id="IPR050104">
    <property type="entry name" value="FMN-dep_NADH:Q_OxRdtase_AzoR1"/>
</dbReference>
<dbReference type="InterPro" id="IPR023048">
    <property type="entry name" value="NADH:quinone_OxRdtase_FMN_depd"/>
</dbReference>
<dbReference type="PANTHER" id="PTHR43741">
    <property type="entry name" value="FMN-DEPENDENT NADH-AZOREDUCTASE 1"/>
    <property type="match status" value="1"/>
</dbReference>
<dbReference type="PANTHER" id="PTHR43741:SF4">
    <property type="entry name" value="FMN-DEPENDENT NADH:QUINONE OXIDOREDUCTASE"/>
    <property type="match status" value="1"/>
</dbReference>
<dbReference type="Pfam" id="PF02525">
    <property type="entry name" value="Flavodoxin_2"/>
    <property type="match status" value="1"/>
</dbReference>
<dbReference type="SUPFAM" id="SSF52218">
    <property type="entry name" value="Flavoproteins"/>
    <property type="match status" value="1"/>
</dbReference>